<gene>
    <name type="primary">sti35</name>
</gene>
<comment type="function">
    <text evidence="1">Involved in biosynthesis of the thiamine precursor thiazole. Catalyzes the conversion of NAD and glycine to adenosine diphosphate 5-(2-hydroxyethyl)-4-methylthiazole-2-carboxylic acid (ADT), an adenylated thiazole intermediate. The reaction includes an iron-dependent sulfide transfer from a conserved cysteine residue of the protein to a thiazole intermediate. The enzyme can only undergo a single turnover, which suggests it is a suicide enzyme. May have additional roles in adaptation to various stress conditions and in DNA damage tolerance.</text>
</comment>
<comment type="catalytic activity">
    <reaction evidence="1">
        <text>[ADP-thiazole synthase]-L-cysteine + glycine + NAD(+) = [ADP-thiazole synthase]-dehydroalanine + ADP-5-ethyl-4-methylthiazole-2-carboxylate + nicotinamide + 3 H2O + 2 H(+)</text>
        <dbReference type="Rhea" id="RHEA:55708"/>
        <dbReference type="Rhea" id="RHEA-COMP:14264"/>
        <dbReference type="Rhea" id="RHEA-COMP:14265"/>
        <dbReference type="ChEBI" id="CHEBI:15377"/>
        <dbReference type="ChEBI" id="CHEBI:15378"/>
        <dbReference type="ChEBI" id="CHEBI:17154"/>
        <dbReference type="ChEBI" id="CHEBI:29950"/>
        <dbReference type="ChEBI" id="CHEBI:57305"/>
        <dbReference type="ChEBI" id="CHEBI:57540"/>
        <dbReference type="ChEBI" id="CHEBI:90873"/>
        <dbReference type="ChEBI" id="CHEBI:139151"/>
        <dbReference type="EC" id="2.4.2.60"/>
    </reaction>
</comment>
<comment type="cofactor">
    <cofactor evidence="1">
        <name>Fe cation</name>
        <dbReference type="ChEBI" id="CHEBI:24875"/>
    </cofactor>
    <text evidence="1">Binds 1 Fe cation per subunit.</text>
</comment>
<comment type="subunit">
    <text evidence="1">Homooctamer.</text>
</comment>
<comment type="subcellular location">
    <subcellularLocation>
        <location evidence="1">Cytoplasm</location>
    </subcellularLocation>
    <subcellularLocation>
        <location evidence="1">Nucleus</location>
    </subcellularLocation>
</comment>
<comment type="developmental stage">
    <text evidence="2">Expressed in mycelia but not in yeast-form cells. Expressed during plant infection.</text>
</comment>
<comment type="induction">
    <text evidence="2">Repressed by thiamine. Induced by ethanol, Cu(2+) chloride and heat.</text>
</comment>
<comment type="PTM">
    <text evidence="1">During the catalytic reaction, a sulfide is transferred from Cys-209 to a reaction intermediate, generating a dehydroalanine residue.</text>
</comment>
<comment type="similarity">
    <text evidence="1">Belongs to the THI4 family.</text>
</comment>
<feature type="chain" id="PRO_0000034054" description="Thiamine thiazole synthase">
    <location>
        <begin position="1"/>
        <end position="320"/>
    </location>
</feature>
<feature type="binding site" evidence="1">
    <location>
        <position position="82"/>
    </location>
    <ligand>
        <name>substrate</name>
    </ligand>
</feature>
<feature type="binding site" evidence="1">
    <location>
        <begin position="103"/>
        <end position="104"/>
    </location>
    <ligand>
        <name>substrate</name>
    </ligand>
</feature>
<feature type="binding site" evidence="1">
    <location>
        <position position="111"/>
    </location>
    <ligand>
        <name>substrate</name>
    </ligand>
</feature>
<feature type="binding site" evidence="1">
    <location>
        <position position="176"/>
    </location>
    <ligand>
        <name>substrate</name>
    </ligand>
</feature>
<feature type="binding site" evidence="1">
    <location>
        <position position="211"/>
    </location>
    <ligand>
        <name>substrate</name>
    </ligand>
</feature>
<feature type="binding site" evidence="1">
    <location>
        <position position="226"/>
    </location>
    <ligand>
        <name>substrate</name>
    </ligand>
</feature>
<feature type="binding site" evidence="1">
    <location>
        <position position="278"/>
    </location>
    <ligand>
        <name>substrate</name>
    </ligand>
</feature>
<feature type="binding site" evidence="1">
    <location>
        <begin position="288"/>
        <end position="290"/>
    </location>
    <ligand>
        <name>substrate</name>
    </ligand>
</feature>
<feature type="modified residue" description="2,3-didehydroalanine (Cys)" evidence="1">
    <location>
        <position position="209"/>
    </location>
</feature>
<keyword id="KW-0963">Cytoplasm</keyword>
<keyword id="KW-0903">Direct protein sequencing</keyword>
<keyword id="KW-0408">Iron</keyword>
<keyword id="KW-0479">Metal-binding</keyword>
<keyword id="KW-0520">NAD</keyword>
<keyword id="KW-0539">Nucleus</keyword>
<keyword id="KW-0346">Stress response</keyword>
<keyword id="KW-0784">Thiamine biosynthesis</keyword>
<keyword id="KW-0808">Transferase</keyword>
<protein>
    <recommendedName>
        <fullName evidence="1">Thiamine thiazole synthase</fullName>
        <ecNumber evidence="1">2.4.2.60</ecNumber>
    </recommendedName>
    <alternativeName>
        <fullName>Stress-inducible protein sti35</fullName>
    </alternativeName>
    <alternativeName>
        <fullName evidence="1">Thiazole biosynthetic enzyme</fullName>
    </alternativeName>
</protein>
<dbReference type="EC" id="2.4.2.60" evidence="1"/>
<dbReference type="EMBL" id="M33643">
    <property type="protein sequence ID" value="AAA33341.1"/>
    <property type="molecule type" value="mRNA"/>
</dbReference>
<dbReference type="EMBL" id="AB033416">
    <property type="protein sequence ID" value="BAA85305.1"/>
    <property type="molecule type" value="Genomic_DNA"/>
</dbReference>
<dbReference type="PIR" id="B37767">
    <property type="entry name" value="B37767"/>
</dbReference>
<dbReference type="SMR" id="P23618"/>
<dbReference type="VEuPathDB" id="FungiDB:FOC1_g10008179"/>
<dbReference type="VEuPathDB" id="FungiDB:FOC4_g10009273"/>
<dbReference type="VEuPathDB" id="FungiDB:FOIG_10807"/>
<dbReference type="VEuPathDB" id="FungiDB:FOMG_07196"/>
<dbReference type="VEuPathDB" id="FungiDB:FOXG_10428"/>
<dbReference type="VEuPathDB" id="FungiDB:FOZG_09902"/>
<dbReference type="VEuPathDB" id="FungiDB:HZS61_002986"/>
<dbReference type="OMA" id="MFPRIVV"/>
<dbReference type="OrthoDB" id="410463at2759"/>
<dbReference type="PhylomeDB" id="P23618"/>
<dbReference type="GO" id="GO:0005829">
    <property type="term" value="C:cytosol"/>
    <property type="evidence" value="ECO:0007669"/>
    <property type="project" value="UniProtKB-UniRule"/>
</dbReference>
<dbReference type="GO" id="GO:0005634">
    <property type="term" value="C:nucleus"/>
    <property type="evidence" value="ECO:0007669"/>
    <property type="project" value="UniProtKB-SubCell"/>
</dbReference>
<dbReference type="GO" id="GO:0160205">
    <property type="term" value="F:cysteine-dependent adenosine diphosphate thiazole synthase activity"/>
    <property type="evidence" value="ECO:0007669"/>
    <property type="project" value="UniProtKB-EC"/>
</dbReference>
<dbReference type="GO" id="GO:0005506">
    <property type="term" value="F:iron ion binding"/>
    <property type="evidence" value="ECO:0007669"/>
    <property type="project" value="UniProtKB-UniRule"/>
</dbReference>
<dbReference type="GO" id="GO:0009228">
    <property type="term" value="P:thiamine biosynthetic process"/>
    <property type="evidence" value="ECO:0007669"/>
    <property type="project" value="UniProtKB-UniRule"/>
</dbReference>
<dbReference type="GO" id="GO:0052837">
    <property type="term" value="P:thiazole biosynthetic process"/>
    <property type="evidence" value="ECO:0007669"/>
    <property type="project" value="UniProtKB-UniRule"/>
</dbReference>
<dbReference type="Gene3D" id="6.10.250.2840">
    <property type="match status" value="1"/>
</dbReference>
<dbReference type="Gene3D" id="3.50.50.60">
    <property type="entry name" value="FAD/NAD(P)-binding domain"/>
    <property type="match status" value="1"/>
</dbReference>
<dbReference type="HAMAP" id="MF_03158">
    <property type="entry name" value="THI4"/>
    <property type="match status" value="1"/>
</dbReference>
<dbReference type="InterPro" id="IPR036188">
    <property type="entry name" value="FAD/NAD-bd_sf"/>
</dbReference>
<dbReference type="InterPro" id="IPR027495">
    <property type="entry name" value="Sti35"/>
</dbReference>
<dbReference type="InterPro" id="IPR002922">
    <property type="entry name" value="Thi4_fam"/>
</dbReference>
<dbReference type="NCBIfam" id="TIGR00292">
    <property type="entry name" value="sulfide-dependent adenosine diphosphate thiazole synthase"/>
    <property type="match status" value="1"/>
</dbReference>
<dbReference type="PANTHER" id="PTHR43422">
    <property type="entry name" value="THIAMINE THIAZOLE SYNTHASE"/>
    <property type="match status" value="1"/>
</dbReference>
<dbReference type="PANTHER" id="PTHR43422:SF3">
    <property type="entry name" value="THIAMINE THIAZOLE SYNTHASE"/>
    <property type="match status" value="1"/>
</dbReference>
<dbReference type="Pfam" id="PF01946">
    <property type="entry name" value="Thi4"/>
    <property type="match status" value="1"/>
</dbReference>
<dbReference type="SUPFAM" id="SSF51905">
    <property type="entry name" value="FAD/NAD(P)-binding domain"/>
    <property type="match status" value="1"/>
</dbReference>
<accession>P23618</accession>
<sequence>MAPPAAVSPPSRSAELATSTKLPVMSKNINTKTVEEMLGQWDDFKFAPIRESQVSRAMTRRYFQDLDNYAESDIVIIGAGSCGLSAAYILGKKRPDLKIAIIEASVSPGGGAWLGGQLFSAMIMRKPADAFLREVGVPYEDEGNYVVVKHAALFTSTIMSKVLQMPNIKLFNATCVEDLITRPSEEGVRIAGVVTNWTLVSMHHDDQSCMDPNTINAPLIISTTGHDGPMGAFCVKRLVSMQRIEKLGGMRGLDMNLAEDAIVKGTREIVPGLIVGGMELSEVDGANRMGPTFGAMALSGLKAAEEALKIFDTRKKQNDL</sequence>
<evidence type="ECO:0000255" key="1">
    <source>
        <dbReference type="HAMAP-Rule" id="MF_03158"/>
    </source>
</evidence>
<evidence type="ECO:0000269" key="2">
    <source>
    </source>
</evidence>
<proteinExistence type="evidence at protein level"/>
<organism>
    <name type="scientific">Fusarium oxysporum</name>
    <name type="common">Fusarium vascular wilt</name>
    <dbReference type="NCBI Taxonomy" id="5507"/>
    <lineage>
        <taxon>Eukaryota</taxon>
        <taxon>Fungi</taxon>
        <taxon>Dikarya</taxon>
        <taxon>Ascomycota</taxon>
        <taxon>Pezizomycotina</taxon>
        <taxon>Sordariomycetes</taxon>
        <taxon>Hypocreomycetidae</taxon>
        <taxon>Hypocreales</taxon>
        <taxon>Nectriaceae</taxon>
        <taxon>Fusarium</taxon>
        <taxon>Fusarium oxysporum species complex</taxon>
    </lineage>
</organism>
<name>THI4_FUSOX</name>
<reference key="1">
    <citation type="journal article" date="1990" name="J. Bacteriol.">
        <title>sti35, a stress-responsive gene in Fusarium spp.</title>
        <authorList>
            <person name="Choi G.H."/>
            <person name="Marek E.T."/>
            <person name="Schardl C.L."/>
            <person name="Richey M.G."/>
            <person name="Chang S."/>
            <person name="Smith D.A."/>
        </authorList>
    </citation>
    <scope>NUCLEOTIDE SEQUENCE [MRNA]</scope>
    <source>
        <strain>f. sp. cucumerinum / Isolate B1-GK</strain>
    </source>
</reference>
<reference key="2">
    <citation type="journal article" date="2000" name="J. Biosci. Bioeng.">
        <title>Detection and cloning of the gene encoding a protein produced by nonpathogenic mutants of Fusarium oxysporum.</title>
        <authorList>
            <person name="Akiyama K."/>
            <person name="Thanonkeo P."/>
            <person name="Ogawa H."/>
            <person name="Ohguchi T."/>
            <person name="Takata R."/>
        </authorList>
    </citation>
    <scope>NUCLEOTIDE SEQUENCE [GENOMIC DNA]</scope>
    <scope>PROTEIN SEQUENCE OF 28-57</scope>
    <scope>INDUCTION</scope>
    <scope>DEVELOPMENTAL STAGE</scope>
    <source>
        <strain>f. sp. cucumerinum / F9</strain>
    </source>
</reference>